<name>UBIA_THIDA</name>
<accession>Q3SLJ4</accession>
<proteinExistence type="inferred from homology"/>
<keyword id="KW-0997">Cell inner membrane</keyword>
<keyword id="KW-1003">Cell membrane</keyword>
<keyword id="KW-0460">Magnesium</keyword>
<keyword id="KW-0472">Membrane</keyword>
<keyword id="KW-1185">Reference proteome</keyword>
<keyword id="KW-0808">Transferase</keyword>
<keyword id="KW-0812">Transmembrane</keyword>
<keyword id="KW-1133">Transmembrane helix</keyword>
<keyword id="KW-0831">Ubiquinone biosynthesis</keyword>
<protein>
    <recommendedName>
        <fullName evidence="1">4-hydroxybenzoate octaprenyltransferase</fullName>
        <ecNumber evidence="1">2.5.1.39</ecNumber>
    </recommendedName>
    <alternativeName>
        <fullName evidence="1">4-HB polyprenyltransferase</fullName>
    </alternativeName>
</protein>
<reference key="1">
    <citation type="journal article" date="2006" name="J. Bacteriol.">
        <title>The genome sequence of the obligately chemolithoautotrophic, facultatively anaerobic bacterium Thiobacillus denitrificans.</title>
        <authorList>
            <person name="Beller H.R."/>
            <person name="Chain P.S."/>
            <person name="Letain T.E."/>
            <person name="Chakicherla A."/>
            <person name="Larimer F.W."/>
            <person name="Richardson P.M."/>
            <person name="Coleman M.A."/>
            <person name="Wood A.P."/>
            <person name="Kelly D.P."/>
        </authorList>
    </citation>
    <scope>NUCLEOTIDE SEQUENCE [LARGE SCALE GENOMIC DNA]</scope>
    <source>
        <strain>ATCC 25259 / T1</strain>
    </source>
</reference>
<organism>
    <name type="scientific">Thiobacillus denitrificans (strain ATCC 25259 / T1)</name>
    <dbReference type="NCBI Taxonomy" id="292415"/>
    <lineage>
        <taxon>Bacteria</taxon>
        <taxon>Pseudomonadati</taxon>
        <taxon>Pseudomonadota</taxon>
        <taxon>Betaproteobacteria</taxon>
        <taxon>Nitrosomonadales</taxon>
        <taxon>Thiobacillaceae</taxon>
        <taxon>Thiobacillus</taxon>
    </lineage>
</organism>
<gene>
    <name evidence="1" type="primary">ubiA</name>
    <name type="ordered locus">Tbd_0463</name>
</gene>
<comment type="function">
    <text evidence="1">Catalyzes the prenylation of para-hydroxybenzoate (PHB) with an all-trans polyprenyl group. Mediates the second step in the final reaction sequence of ubiquinone-8 (UQ-8) biosynthesis, which is the condensation of the polyisoprenoid side chain with PHB, generating the first membrane-bound Q intermediate 3-octaprenyl-4-hydroxybenzoate.</text>
</comment>
<comment type="catalytic activity">
    <reaction evidence="1">
        <text>all-trans-octaprenyl diphosphate + 4-hydroxybenzoate = 4-hydroxy-3-(all-trans-octaprenyl)benzoate + diphosphate</text>
        <dbReference type="Rhea" id="RHEA:27782"/>
        <dbReference type="ChEBI" id="CHEBI:1617"/>
        <dbReference type="ChEBI" id="CHEBI:17879"/>
        <dbReference type="ChEBI" id="CHEBI:33019"/>
        <dbReference type="ChEBI" id="CHEBI:57711"/>
        <dbReference type="EC" id="2.5.1.39"/>
    </reaction>
</comment>
<comment type="cofactor">
    <cofactor evidence="1">
        <name>Mg(2+)</name>
        <dbReference type="ChEBI" id="CHEBI:18420"/>
    </cofactor>
</comment>
<comment type="pathway">
    <text evidence="1">Cofactor biosynthesis; ubiquinone biosynthesis.</text>
</comment>
<comment type="subcellular location">
    <subcellularLocation>
        <location evidence="1">Cell inner membrane</location>
        <topology evidence="1">Multi-pass membrane protein</topology>
    </subcellularLocation>
</comment>
<comment type="similarity">
    <text evidence="1">Belongs to the UbiA prenyltransferase family.</text>
</comment>
<sequence length="293" mass="32455">MTLTERLSLYEKLARLDKPIGILLLLWPTLWAQWLASNGDPDWLILWIFVMGVVLMRSAGCVVNDYADRDFDPHVARTRDRPIAAGKVSPKEALLLAAGLSLLAFLLILPLNALVLKLSLIALFLAGSYPFTKRFFAIPQAYLGVAFGFGIPMSYAALWGEVPAEAWLLLAANVFWAIAYDTEYAMVDRADDLKIGIKTSAITFGRFDLTAIAFCYAATLALLAWVGALRDFSGWYYAGLAAAGAIAVYHLRLIRERDPRQCFRAFLHNTWFGAAVFGGIVLHFLLRSGSLFP</sequence>
<evidence type="ECO:0000255" key="1">
    <source>
        <dbReference type="HAMAP-Rule" id="MF_01635"/>
    </source>
</evidence>
<dbReference type="EC" id="2.5.1.39" evidence="1"/>
<dbReference type="EMBL" id="CP000116">
    <property type="protein sequence ID" value="AAZ96416.1"/>
    <property type="molecule type" value="Genomic_DNA"/>
</dbReference>
<dbReference type="RefSeq" id="WP_011310975.1">
    <property type="nucleotide sequence ID" value="NC_007404.1"/>
</dbReference>
<dbReference type="SMR" id="Q3SLJ4"/>
<dbReference type="STRING" id="292415.Tbd_0463"/>
<dbReference type="KEGG" id="tbd:Tbd_0463"/>
<dbReference type="eggNOG" id="COG0382">
    <property type="taxonomic scope" value="Bacteria"/>
</dbReference>
<dbReference type="HOGENOM" id="CLU_034879_1_0_4"/>
<dbReference type="OrthoDB" id="9782418at2"/>
<dbReference type="UniPathway" id="UPA00232"/>
<dbReference type="Proteomes" id="UP000008291">
    <property type="component" value="Chromosome"/>
</dbReference>
<dbReference type="GO" id="GO:0005886">
    <property type="term" value="C:plasma membrane"/>
    <property type="evidence" value="ECO:0007669"/>
    <property type="project" value="UniProtKB-SubCell"/>
</dbReference>
<dbReference type="GO" id="GO:0008412">
    <property type="term" value="F:4-hydroxybenzoate polyprenyltransferase activity"/>
    <property type="evidence" value="ECO:0007669"/>
    <property type="project" value="UniProtKB-UniRule"/>
</dbReference>
<dbReference type="GO" id="GO:0006744">
    <property type="term" value="P:ubiquinone biosynthetic process"/>
    <property type="evidence" value="ECO:0007669"/>
    <property type="project" value="UniProtKB-UniRule"/>
</dbReference>
<dbReference type="CDD" id="cd13959">
    <property type="entry name" value="PT_UbiA_COQ2"/>
    <property type="match status" value="1"/>
</dbReference>
<dbReference type="FunFam" id="1.10.357.140:FF:000002">
    <property type="entry name" value="4-hydroxybenzoate octaprenyltransferase"/>
    <property type="match status" value="1"/>
</dbReference>
<dbReference type="FunFam" id="1.20.120.1780:FF:000001">
    <property type="entry name" value="4-hydroxybenzoate octaprenyltransferase"/>
    <property type="match status" value="1"/>
</dbReference>
<dbReference type="Gene3D" id="1.10.357.140">
    <property type="entry name" value="UbiA prenyltransferase"/>
    <property type="match status" value="1"/>
</dbReference>
<dbReference type="Gene3D" id="1.20.120.1780">
    <property type="entry name" value="UbiA prenyltransferase"/>
    <property type="match status" value="1"/>
</dbReference>
<dbReference type="HAMAP" id="MF_01635">
    <property type="entry name" value="UbiA"/>
    <property type="match status" value="1"/>
</dbReference>
<dbReference type="InterPro" id="IPR006370">
    <property type="entry name" value="HB_polyprenyltransferase-like"/>
</dbReference>
<dbReference type="InterPro" id="IPR039653">
    <property type="entry name" value="Prenyltransferase"/>
</dbReference>
<dbReference type="InterPro" id="IPR000537">
    <property type="entry name" value="UbiA_prenyltransferase"/>
</dbReference>
<dbReference type="InterPro" id="IPR030470">
    <property type="entry name" value="UbiA_prenylTrfase_CS"/>
</dbReference>
<dbReference type="InterPro" id="IPR044878">
    <property type="entry name" value="UbiA_sf"/>
</dbReference>
<dbReference type="NCBIfam" id="TIGR01474">
    <property type="entry name" value="ubiA_proteo"/>
    <property type="match status" value="1"/>
</dbReference>
<dbReference type="PANTHER" id="PTHR11048:SF28">
    <property type="entry name" value="4-HYDROXYBENZOATE POLYPRENYLTRANSFERASE, MITOCHONDRIAL"/>
    <property type="match status" value="1"/>
</dbReference>
<dbReference type="PANTHER" id="PTHR11048">
    <property type="entry name" value="PRENYLTRANSFERASES"/>
    <property type="match status" value="1"/>
</dbReference>
<dbReference type="Pfam" id="PF01040">
    <property type="entry name" value="UbiA"/>
    <property type="match status" value="1"/>
</dbReference>
<dbReference type="PROSITE" id="PS00943">
    <property type="entry name" value="UBIA"/>
    <property type="match status" value="1"/>
</dbReference>
<feature type="chain" id="PRO_0000262847" description="4-hydroxybenzoate octaprenyltransferase">
    <location>
        <begin position="1"/>
        <end position="293"/>
    </location>
</feature>
<feature type="transmembrane region" description="Helical" evidence="1">
    <location>
        <begin position="19"/>
        <end position="39"/>
    </location>
</feature>
<feature type="transmembrane region" description="Helical" evidence="1">
    <location>
        <begin position="43"/>
        <end position="63"/>
    </location>
</feature>
<feature type="transmembrane region" description="Helical" evidence="1">
    <location>
        <begin position="95"/>
        <end position="115"/>
    </location>
</feature>
<feature type="transmembrane region" description="Helical" evidence="1">
    <location>
        <begin position="135"/>
        <end position="155"/>
    </location>
</feature>
<feature type="transmembrane region" description="Helical" evidence="1">
    <location>
        <begin position="158"/>
        <end position="178"/>
    </location>
</feature>
<feature type="transmembrane region" description="Helical" evidence="1">
    <location>
        <begin position="209"/>
        <end position="229"/>
    </location>
</feature>
<feature type="transmembrane region" description="Helical" evidence="1">
    <location>
        <begin position="231"/>
        <end position="251"/>
    </location>
</feature>
<feature type="transmembrane region" description="Helical" evidence="1">
    <location>
        <begin position="266"/>
        <end position="286"/>
    </location>
</feature>